<accession>Q7VHS5</accession>
<organism>
    <name type="scientific">Helicobacter hepaticus (strain ATCC 51449 / 3B1)</name>
    <dbReference type="NCBI Taxonomy" id="235279"/>
    <lineage>
        <taxon>Bacteria</taxon>
        <taxon>Pseudomonadati</taxon>
        <taxon>Campylobacterota</taxon>
        <taxon>Epsilonproteobacteria</taxon>
        <taxon>Campylobacterales</taxon>
        <taxon>Helicobacteraceae</taxon>
        <taxon>Helicobacter</taxon>
    </lineage>
</organism>
<proteinExistence type="inferred from homology"/>
<reference key="1">
    <citation type="journal article" date="2003" name="Proc. Natl. Acad. Sci. U.S.A.">
        <title>The complete genome sequence of the carcinogenic bacterium Helicobacter hepaticus.</title>
        <authorList>
            <person name="Suerbaum S."/>
            <person name="Josenhans C."/>
            <person name="Sterzenbach T."/>
            <person name="Drescher B."/>
            <person name="Brandt P."/>
            <person name="Bell M."/>
            <person name="Droege M."/>
            <person name="Fartmann B."/>
            <person name="Fischer H.-P."/>
            <person name="Ge Z."/>
            <person name="Hoerster A."/>
            <person name="Holland R."/>
            <person name="Klein K."/>
            <person name="Koenig J."/>
            <person name="Macko L."/>
            <person name="Mendz G.L."/>
            <person name="Nyakatura G."/>
            <person name="Schauer D.B."/>
            <person name="Shen Z."/>
            <person name="Weber J."/>
            <person name="Frosch M."/>
            <person name="Fox J.G."/>
        </authorList>
    </citation>
    <scope>NUCLEOTIDE SEQUENCE [LARGE SCALE GENOMIC DNA]</scope>
    <source>
        <strain>ATCC 51449 / 3B1</strain>
    </source>
</reference>
<sequence>MSILKEAYLYFANGLFFKAQSFGSDGTFVGEVVFNTSMSGYQEVITDPSYSGQFIVFSMPEIGIVGVNNQDSESPRAACTGVILSSYNDFVSNFRSEQSLSTYLKEHNIMGICGVDTRNLIKMLTTQGAMMMIASTQITQESELKASLSRTPPIQDINFIKEVSTKTSYVHTDSTFDFTHFAYGTSPNFKAKVVAIDFGAKRNILNELVAVGLEVEVIPHSFSAAEILSRFKAGEIQGVFLSNGPGDPLVLHNEIEQIKQLIQSDIPIFGICLGHQLLSIAHGFPTYKLKFGHHGSNHPIKNLQSGAVEITAQNHNYCVPESIAQIATITHRNLFDNTIEGVRYKDKPIFSVQHHPEASPGPREARILFEEFAKLCCK</sequence>
<feature type="chain" id="PRO_0000112281" description="Carbamoyl phosphate synthase small chain">
    <location>
        <begin position="1"/>
        <end position="378"/>
    </location>
</feature>
<feature type="domain" description="Glutamine amidotransferase type-1" evidence="1">
    <location>
        <begin position="192"/>
        <end position="378"/>
    </location>
</feature>
<feature type="region of interest" description="CPSase" evidence="1">
    <location>
        <begin position="1"/>
        <end position="188"/>
    </location>
</feature>
<feature type="active site" description="Nucleophile" evidence="1">
    <location>
        <position position="272"/>
    </location>
</feature>
<feature type="active site" evidence="1">
    <location>
        <position position="355"/>
    </location>
</feature>
<feature type="active site" evidence="1">
    <location>
        <position position="357"/>
    </location>
</feature>
<feature type="binding site" evidence="1">
    <location>
        <position position="49"/>
    </location>
    <ligand>
        <name>L-glutamine</name>
        <dbReference type="ChEBI" id="CHEBI:58359"/>
    </ligand>
</feature>
<feature type="binding site" evidence="1">
    <location>
        <position position="244"/>
    </location>
    <ligand>
        <name>L-glutamine</name>
        <dbReference type="ChEBI" id="CHEBI:58359"/>
    </ligand>
</feature>
<feature type="binding site" evidence="1">
    <location>
        <position position="246"/>
    </location>
    <ligand>
        <name>L-glutamine</name>
        <dbReference type="ChEBI" id="CHEBI:58359"/>
    </ligand>
</feature>
<feature type="binding site" evidence="1">
    <location>
        <position position="273"/>
    </location>
    <ligand>
        <name>L-glutamine</name>
        <dbReference type="ChEBI" id="CHEBI:58359"/>
    </ligand>
</feature>
<feature type="binding site" evidence="1">
    <location>
        <position position="276"/>
    </location>
    <ligand>
        <name>L-glutamine</name>
        <dbReference type="ChEBI" id="CHEBI:58359"/>
    </ligand>
</feature>
<feature type="binding site" evidence="1">
    <location>
        <position position="314"/>
    </location>
    <ligand>
        <name>L-glutamine</name>
        <dbReference type="ChEBI" id="CHEBI:58359"/>
    </ligand>
</feature>
<feature type="binding site" evidence="1">
    <location>
        <position position="317"/>
    </location>
    <ligand>
        <name>L-glutamine</name>
        <dbReference type="ChEBI" id="CHEBI:58359"/>
    </ligand>
</feature>
<name>CARA_HELHP</name>
<protein>
    <recommendedName>
        <fullName evidence="1">Carbamoyl phosphate synthase small chain</fullName>
        <ecNumber evidence="1">6.3.5.5</ecNumber>
    </recommendedName>
    <alternativeName>
        <fullName evidence="1">Carbamoyl phosphate synthetase glutamine chain</fullName>
    </alternativeName>
</protein>
<comment type="function">
    <text evidence="1">Small subunit of the glutamine-dependent carbamoyl phosphate synthetase (CPSase). CPSase catalyzes the formation of carbamoyl phosphate from the ammonia moiety of glutamine, carbonate, and phosphate donated by ATP, constituting the first step of 2 biosynthetic pathways, one leading to arginine and/or urea and the other to pyrimidine nucleotides. The small subunit (glutamine amidotransferase) binds and cleaves glutamine to supply the large subunit with the substrate ammonia.</text>
</comment>
<comment type="catalytic activity">
    <reaction evidence="1">
        <text>hydrogencarbonate + L-glutamine + 2 ATP + H2O = carbamoyl phosphate + L-glutamate + 2 ADP + phosphate + 2 H(+)</text>
        <dbReference type="Rhea" id="RHEA:18633"/>
        <dbReference type="ChEBI" id="CHEBI:15377"/>
        <dbReference type="ChEBI" id="CHEBI:15378"/>
        <dbReference type="ChEBI" id="CHEBI:17544"/>
        <dbReference type="ChEBI" id="CHEBI:29985"/>
        <dbReference type="ChEBI" id="CHEBI:30616"/>
        <dbReference type="ChEBI" id="CHEBI:43474"/>
        <dbReference type="ChEBI" id="CHEBI:58228"/>
        <dbReference type="ChEBI" id="CHEBI:58359"/>
        <dbReference type="ChEBI" id="CHEBI:456216"/>
        <dbReference type="EC" id="6.3.5.5"/>
    </reaction>
</comment>
<comment type="catalytic activity">
    <molecule>Carbamoyl phosphate synthase small chain</molecule>
    <reaction evidence="1">
        <text>L-glutamine + H2O = L-glutamate + NH4(+)</text>
        <dbReference type="Rhea" id="RHEA:15889"/>
        <dbReference type="ChEBI" id="CHEBI:15377"/>
        <dbReference type="ChEBI" id="CHEBI:28938"/>
        <dbReference type="ChEBI" id="CHEBI:29985"/>
        <dbReference type="ChEBI" id="CHEBI:58359"/>
    </reaction>
</comment>
<comment type="pathway">
    <text evidence="1">Amino-acid biosynthesis; L-arginine biosynthesis; carbamoyl phosphate from bicarbonate: step 1/1.</text>
</comment>
<comment type="pathway">
    <text evidence="1">Pyrimidine metabolism; UMP biosynthesis via de novo pathway; (S)-dihydroorotate from bicarbonate: step 1/3.</text>
</comment>
<comment type="subunit">
    <text evidence="1">Composed of two chains; the small (or glutamine) chain promotes the hydrolysis of glutamine to ammonia, which is used by the large (or ammonia) chain to synthesize carbamoyl phosphate. Tetramer of heterodimers (alpha,beta)4.</text>
</comment>
<comment type="similarity">
    <text evidence="1">Belongs to the CarA family.</text>
</comment>
<dbReference type="EC" id="6.3.5.5" evidence="1"/>
<dbReference type="EMBL" id="AE017125">
    <property type="protein sequence ID" value="AAP77485.1"/>
    <property type="molecule type" value="Genomic_DNA"/>
</dbReference>
<dbReference type="RefSeq" id="WP_011115728.1">
    <property type="nucleotide sequence ID" value="NC_004917.1"/>
</dbReference>
<dbReference type="SMR" id="Q7VHS5"/>
<dbReference type="STRING" id="235279.HH_0888"/>
<dbReference type="KEGG" id="hhe:HH_0888"/>
<dbReference type="eggNOG" id="COG0505">
    <property type="taxonomic scope" value="Bacteria"/>
</dbReference>
<dbReference type="HOGENOM" id="CLU_035901_2_1_7"/>
<dbReference type="OrthoDB" id="9804328at2"/>
<dbReference type="UniPathway" id="UPA00068">
    <property type="reaction ID" value="UER00171"/>
</dbReference>
<dbReference type="UniPathway" id="UPA00070">
    <property type="reaction ID" value="UER00115"/>
</dbReference>
<dbReference type="Proteomes" id="UP000002495">
    <property type="component" value="Chromosome"/>
</dbReference>
<dbReference type="GO" id="GO:0005524">
    <property type="term" value="F:ATP binding"/>
    <property type="evidence" value="ECO:0007669"/>
    <property type="project" value="UniProtKB-UniRule"/>
</dbReference>
<dbReference type="GO" id="GO:0004088">
    <property type="term" value="F:carbamoyl-phosphate synthase (glutamine-hydrolyzing) activity"/>
    <property type="evidence" value="ECO:0007669"/>
    <property type="project" value="UniProtKB-UniRule"/>
</dbReference>
<dbReference type="GO" id="GO:0004359">
    <property type="term" value="F:glutaminase activity"/>
    <property type="evidence" value="ECO:0007669"/>
    <property type="project" value="RHEA"/>
</dbReference>
<dbReference type="GO" id="GO:0006207">
    <property type="term" value="P:'de novo' pyrimidine nucleobase biosynthetic process"/>
    <property type="evidence" value="ECO:0007669"/>
    <property type="project" value="InterPro"/>
</dbReference>
<dbReference type="GO" id="GO:0044205">
    <property type="term" value="P:'de novo' UMP biosynthetic process"/>
    <property type="evidence" value="ECO:0007669"/>
    <property type="project" value="UniProtKB-UniRule"/>
</dbReference>
<dbReference type="GO" id="GO:0006541">
    <property type="term" value="P:glutamine metabolic process"/>
    <property type="evidence" value="ECO:0007669"/>
    <property type="project" value="InterPro"/>
</dbReference>
<dbReference type="GO" id="GO:0006526">
    <property type="term" value="P:L-arginine biosynthetic process"/>
    <property type="evidence" value="ECO:0007669"/>
    <property type="project" value="UniProtKB-UniRule"/>
</dbReference>
<dbReference type="CDD" id="cd01744">
    <property type="entry name" value="GATase1_CPSase"/>
    <property type="match status" value="1"/>
</dbReference>
<dbReference type="Gene3D" id="3.40.50.880">
    <property type="match status" value="1"/>
</dbReference>
<dbReference type="Gene3D" id="3.50.30.20">
    <property type="entry name" value="Carbamoyl-phosphate synthase small subunit, N-terminal domain"/>
    <property type="match status" value="1"/>
</dbReference>
<dbReference type="HAMAP" id="MF_01209">
    <property type="entry name" value="CPSase_S_chain"/>
    <property type="match status" value="1"/>
</dbReference>
<dbReference type="InterPro" id="IPR050472">
    <property type="entry name" value="Anth_synth/Amidotransfase"/>
</dbReference>
<dbReference type="InterPro" id="IPR006274">
    <property type="entry name" value="CarbamoylP_synth_ssu"/>
</dbReference>
<dbReference type="InterPro" id="IPR002474">
    <property type="entry name" value="CarbamoylP_synth_ssu_N"/>
</dbReference>
<dbReference type="InterPro" id="IPR036480">
    <property type="entry name" value="CarbP_synth_ssu_N_sf"/>
</dbReference>
<dbReference type="InterPro" id="IPR029062">
    <property type="entry name" value="Class_I_gatase-like"/>
</dbReference>
<dbReference type="InterPro" id="IPR035686">
    <property type="entry name" value="CPSase_GATase1"/>
</dbReference>
<dbReference type="InterPro" id="IPR017926">
    <property type="entry name" value="GATASE"/>
</dbReference>
<dbReference type="NCBIfam" id="TIGR01368">
    <property type="entry name" value="CPSaseIIsmall"/>
    <property type="match status" value="1"/>
</dbReference>
<dbReference type="NCBIfam" id="NF009475">
    <property type="entry name" value="PRK12838.1"/>
    <property type="match status" value="1"/>
</dbReference>
<dbReference type="PANTHER" id="PTHR43418:SF7">
    <property type="entry name" value="CARBAMOYL-PHOSPHATE SYNTHASE SMALL CHAIN"/>
    <property type="match status" value="1"/>
</dbReference>
<dbReference type="PANTHER" id="PTHR43418">
    <property type="entry name" value="MULTIFUNCTIONAL TRYPTOPHAN BIOSYNTHESIS PROTEIN-RELATED"/>
    <property type="match status" value="1"/>
</dbReference>
<dbReference type="Pfam" id="PF00988">
    <property type="entry name" value="CPSase_sm_chain"/>
    <property type="match status" value="1"/>
</dbReference>
<dbReference type="Pfam" id="PF00117">
    <property type="entry name" value="GATase"/>
    <property type="match status" value="1"/>
</dbReference>
<dbReference type="PRINTS" id="PR00099">
    <property type="entry name" value="CPSGATASE"/>
</dbReference>
<dbReference type="PRINTS" id="PR00096">
    <property type="entry name" value="GATASE"/>
</dbReference>
<dbReference type="SMART" id="SM01097">
    <property type="entry name" value="CPSase_sm_chain"/>
    <property type="match status" value="1"/>
</dbReference>
<dbReference type="SUPFAM" id="SSF52021">
    <property type="entry name" value="Carbamoyl phosphate synthetase, small subunit N-terminal domain"/>
    <property type="match status" value="1"/>
</dbReference>
<dbReference type="SUPFAM" id="SSF52317">
    <property type="entry name" value="Class I glutamine amidotransferase-like"/>
    <property type="match status" value="1"/>
</dbReference>
<dbReference type="PROSITE" id="PS51273">
    <property type="entry name" value="GATASE_TYPE_1"/>
    <property type="match status" value="1"/>
</dbReference>
<evidence type="ECO:0000255" key="1">
    <source>
        <dbReference type="HAMAP-Rule" id="MF_01209"/>
    </source>
</evidence>
<gene>
    <name evidence="1" type="primary">carA</name>
    <name type="ordered locus">HH_0888</name>
</gene>
<keyword id="KW-0028">Amino-acid biosynthesis</keyword>
<keyword id="KW-0055">Arginine biosynthesis</keyword>
<keyword id="KW-0067">ATP-binding</keyword>
<keyword id="KW-0315">Glutamine amidotransferase</keyword>
<keyword id="KW-0436">Ligase</keyword>
<keyword id="KW-0547">Nucleotide-binding</keyword>
<keyword id="KW-0665">Pyrimidine biosynthesis</keyword>
<keyword id="KW-1185">Reference proteome</keyword>